<organism>
    <name type="scientific">Helicobacter hepaticus (strain ATCC 51449 / 3B1)</name>
    <dbReference type="NCBI Taxonomy" id="235279"/>
    <lineage>
        <taxon>Bacteria</taxon>
        <taxon>Pseudomonadati</taxon>
        <taxon>Campylobacterota</taxon>
        <taxon>Epsilonproteobacteria</taxon>
        <taxon>Campylobacterales</taxon>
        <taxon>Helicobacteraceae</taxon>
        <taxon>Helicobacter</taxon>
    </lineage>
</organism>
<evidence type="ECO:0000255" key="1">
    <source>
        <dbReference type="HAMAP-Rule" id="MF_00406"/>
    </source>
</evidence>
<gene>
    <name evidence="1" type="primary">fabZ</name>
    <name type="ordered locus">HH_1181</name>
</gene>
<sequence length="169" mass="19071">MDTNKIQGDKPIMNVEKIRQILPHRYPMLLVDRVMELVQNTSDSEPNGYIKAYKNVTINEEVFLGHFPNKPIYPGVMQIEGMAQAGGLLAFVSMFGDNVAEAKNKIVYFMTIDNVKFRIPVVPGDRLVYELKVLKHKGSIWQLGANAFVEDKLVSEAELKAMITEAKES</sequence>
<feature type="chain" id="PRO_0000091687" description="3-hydroxyacyl-[acyl-carrier-protein] dehydratase FabZ">
    <location>
        <begin position="1"/>
        <end position="169"/>
    </location>
</feature>
<feature type="active site" evidence="1">
    <location>
        <position position="66"/>
    </location>
</feature>
<dbReference type="EC" id="4.2.1.59" evidence="1"/>
<dbReference type="EMBL" id="AE017125">
    <property type="protein sequence ID" value="AAP77778.1"/>
    <property type="molecule type" value="Genomic_DNA"/>
</dbReference>
<dbReference type="RefSeq" id="WP_011116021.1">
    <property type="nucleotide sequence ID" value="NC_004917.1"/>
</dbReference>
<dbReference type="SMR" id="Q7U319"/>
<dbReference type="STRING" id="235279.HH_1181"/>
<dbReference type="KEGG" id="hhe:HH_1181"/>
<dbReference type="eggNOG" id="COG0764">
    <property type="taxonomic scope" value="Bacteria"/>
</dbReference>
<dbReference type="HOGENOM" id="CLU_078912_1_2_7"/>
<dbReference type="Proteomes" id="UP000002495">
    <property type="component" value="Chromosome"/>
</dbReference>
<dbReference type="GO" id="GO:0005737">
    <property type="term" value="C:cytoplasm"/>
    <property type="evidence" value="ECO:0007669"/>
    <property type="project" value="UniProtKB-SubCell"/>
</dbReference>
<dbReference type="GO" id="GO:0016020">
    <property type="term" value="C:membrane"/>
    <property type="evidence" value="ECO:0007669"/>
    <property type="project" value="GOC"/>
</dbReference>
<dbReference type="GO" id="GO:0019171">
    <property type="term" value="F:(3R)-hydroxyacyl-[acyl-carrier-protein] dehydratase activity"/>
    <property type="evidence" value="ECO:0007669"/>
    <property type="project" value="UniProtKB-EC"/>
</dbReference>
<dbReference type="GO" id="GO:0006633">
    <property type="term" value="P:fatty acid biosynthetic process"/>
    <property type="evidence" value="ECO:0007669"/>
    <property type="project" value="UniProtKB-UniRule"/>
</dbReference>
<dbReference type="GO" id="GO:0009245">
    <property type="term" value="P:lipid A biosynthetic process"/>
    <property type="evidence" value="ECO:0007669"/>
    <property type="project" value="UniProtKB-UniRule"/>
</dbReference>
<dbReference type="CDD" id="cd01288">
    <property type="entry name" value="FabZ"/>
    <property type="match status" value="1"/>
</dbReference>
<dbReference type="FunFam" id="3.10.129.10:FF:000001">
    <property type="entry name" value="3-hydroxyacyl-[acyl-carrier-protein] dehydratase FabZ"/>
    <property type="match status" value="1"/>
</dbReference>
<dbReference type="Gene3D" id="3.10.129.10">
    <property type="entry name" value="Hotdog Thioesterase"/>
    <property type="match status" value="1"/>
</dbReference>
<dbReference type="HAMAP" id="MF_00406">
    <property type="entry name" value="FabZ"/>
    <property type="match status" value="1"/>
</dbReference>
<dbReference type="InterPro" id="IPR013114">
    <property type="entry name" value="FabA_FabZ"/>
</dbReference>
<dbReference type="InterPro" id="IPR010084">
    <property type="entry name" value="FabZ"/>
</dbReference>
<dbReference type="InterPro" id="IPR029069">
    <property type="entry name" value="HotDog_dom_sf"/>
</dbReference>
<dbReference type="NCBIfam" id="TIGR01750">
    <property type="entry name" value="fabZ"/>
    <property type="match status" value="1"/>
</dbReference>
<dbReference type="NCBIfam" id="NF000582">
    <property type="entry name" value="PRK00006.1"/>
    <property type="match status" value="1"/>
</dbReference>
<dbReference type="PANTHER" id="PTHR30272">
    <property type="entry name" value="3-HYDROXYACYL-[ACYL-CARRIER-PROTEIN] DEHYDRATASE"/>
    <property type="match status" value="1"/>
</dbReference>
<dbReference type="PANTHER" id="PTHR30272:SF1">
    <property type="entry name" value="3-HYDROXYACYL-[ACYL-CARRIER-PROTEIN] DEHYDRATASE"/>
    <property type="match status" value="1"/>
</dbReference>
<dbReference type="Pfam" id="PF07977">
    <property type="entry name" value="FabA"/>
    <property type="match status" value="1"/>
</dbReference>
<dbReference type="SUPFAM" id="SSF54637">
    <property type="entry name" value="Thioesterase/thiol ester dehydrase-isomerase"/>
    <property type="match status" value="1"/>
</dbReference>
<keyword id="KW-0963">Cytoplasm</keyword>
<keyword id="KW-0441">Lipid A biosynthesis</keyword>
<keyword id="KW-0444">Lipid biosynthesis</keyword>
<keyword id="KW-0443">Lipid metabolism</keyword>
<keyword id="KW-0456">Lyase</keyword>
<keyword id="KW-1185">Reference proteome</keyword>
<name>FABZ_HELHP</name>
<protein>
    <recommendedName>
        <fullName evidence="1">3-hydroxyacyl-[acyl-carrier-protein] dehydratase FabZ</fullName>
        <ecNumber evidence="1">4.2.1.59</ecNumber>
    </recommendedName>
    <alternativeName>
        <fullName evidence="1">(3R)-hydroxymyristoyl-[acyl-carrier-protein] dehydratase</fullName>
        <shortName evidence="1">(3R)-hydroxymyristoyl-ACP dehydrase</shortName>
    </alternativeName>
    <alternativeName>
        <fullName evidence="1">Beta-hydroxyacyl-ACP dehydratase</fullName>
    </alternativeName>
</protein>
<accession>Q7U319</accession>
<comment type="function">
    <text evidence="1">Involved in unsaturated fatty acids biosynthesis. Catalyzes the dehydration of short chain beta-hydroxyacyl-ACPs and long chain saturated and unsaturated beta-hydroxyacyl-ACPs.</text>
</comment>
<comment type="catalytic activity">
    <reaction evidence="1">
        <text>a (3R)-hydroxyacyl-[ACP] = a (2E)-enoyl-[ACP] + H2O</text>
        <dbReference type="Rhea" id="RHEA:13097"/>
        <dbReference type="Rhea" id="RHEA-COMP:9925"/>
        <dbReference type="Rhea" id="RHEA-COMP:9945"/>
        <dbReference type="ChEBI" id="CHEBI:15377"/>
        <dbReference type="ChEBI" id="CHEBI:78784"/>
        <dbReference type="ChEBI" id="CHEBI:78827"/>
        <dbReference type="EC" id="4.2.1.59"/>
    </reaction>
</comment>
<comment type="subcellular location">
    <subcellularLocation>
        <location evidence="1">Cytoplasm</location>
    </subcellularLocation>
</comment>
<comment type="similarity">
    <text evidence="1">Belongs to the thioester dehydratase family. FabZ subfamily.</text>
</comment>
<reference key="1">
    <citation type="journal article" date="2003" name="Proc. Natl. Acad. Sci. U.S.A.">
        <title>The complete genome sequence of the carcinogenic bacterium Helicobacter hepaticus.</title>
        <authorList>
            <person name="Suerbaum S."/>
            <person name="Josenhans C."/>
            <person name="Sterzenbach T."/>
            <person name="Drescher B."/>
            <person name="Brandt P."/>
            <person name="Bell M."/>
            <person name="Droege M."/>
            <person name="Fartmann B."/>
            <person name="Fischer H.-P."/>
            <person name="Ge Z."/>
            <person name="Hoerster A."/>
            <person name="Holland R."/>
            <person name="Klein K."/>
            <person name="Koenig J."/>
            <person name="Macko L."/>
            <person name="Mendz G.L."/>
            <person name="Nyakatura G."/>
            <person name="Schauer D.B."/>
            <person name="Shen Z."/>
            <person name="Weber J."/>
            <person name="Frosch M."/>
            <person name="Fox J.G."/>
        </authorList>
    </citation>
    <scope>NUCLEOTIDE SEQUENCE [LARGE SCALE GENOMIC DNA]</scope>
    <source>
        <strain>ATCC 51449 / 3B1</strain>
    </source>
</reference>
<proteinExistence type="inferred from homology"/>